<proteinExistence type="inferred from homology"/>
<comment type="function">
    <text evidence="1">DNA-dependent RNA polymerase catalyzes the transcription of DNA into RNA using the four ribonucleoside triphosphates as substrates.</text>
</comment>
<comment type="catalytic activity">
    <reaction evidence="1">
        <text>RNA(n) + a ribonucleoside 5'-triphosphate = RNA(n+1) + diphosphate</text>
        <dbReference type="Rhea" id="RHEA:21248"/>
        <dbReference type="Rhea" id="RHEA-COMP:14527"/>
        <dbReference type="Rhea" id="RHEA-COMP:17342"/>
        <dbReference type="ChEBI" id="CHEBI:33019"/>
        <dbReference type="ChEBI" id="CHEBI:61557"/>
        <dbReference type="ChEBI" id="CHEBI:140395"/>
        <dbReference type="EC" id="2.7.7.6"/>
    </reaction>
</comment>
<comment type="subunit">
    <text evidence="1">The RNAP catalytic core consists of 2 alpha, 1 beta, 1 beta' and 1 omega subunit. When a sigma factor is associated with the core the holoenzyme is formed, which can initiate transcription.</text>
</comment>
<comment type="similarity">
    <text evidence="1">Belongs to the RNA polymerase beta chain family.</text>
</comment>
<evidence type="ECO:0000255" key="1">
    <source>
        <dbReference type="HAMAP-Rule" id="MF_01321"/>
    </source>
</evidence>
<evidence type="ECO:0000256" key="2">
    <source>
        <dbReference type="SAM" id="MobiDB-lite"/>
    </source>
</evidence>
<accession>Q67JT3</accession>
<feature type="chain" id="PRO_0000224113" description="DNA-directed RNA polymerase subunit beta">
    <location>
        <begin position="1"/>
        <end position="1250"/>
    </location>
</feature>
<feature type="region of interest" description="Disordered" evidence="2">
    <location>
        <begin position="1139"/>
        <end position="1226"/>
    </location>
</feature>
<feature type="compositionally biased region" description="Acidic residues" evidence="2">
    <location>
        <begin position="1155"/>
        <end position="1183"/>
    </location>
</feature>
<feature type="compositionally biased region" description="Acidic residues" evidence="2">
    <location>
        <begin position="1207"/>
        <end position="1226"/>
    </location>
</feature>
<protein>
    <recommendedName>
        <fullName evidence="1">DNA-directed RNA polymerase subunit beta</fullName>
        <shortName evidence="1">RNAP subunit beta</shortName>
        <ecNumber evidence="1">2.7.7.6</ecNumber>
    </recommendedName>
    <alternativeName>
        <fullName evidence="1">RNA polymerase subunit beta</fullName>
    </alternativeName>
    <alternativeName>
        <fullName evidence="1">Transcriptase subunit beta</fullName>
    </alternativeName>
</protein>
<reference key="1">
    <citation type="journal article" date="2004" name="Nucleic Acids Res.">
        <title>Genome sequence of Symbiobacterium thermophilum, an uncultivable bacterium that depends on microbial commensalism.</title>
        <authorList>
            <person name="Ueda K."/>
            <person name="Yamashita A."/>
            <person name="Ishikawa J."/>
            <person name="Shimada M."/>
            <person name="Watsuji T."/>
            <person name="Morimura K."/>
            <person name="Ikeda H."/>
            <person name="Hattori M."/>
            <person name="Beppu T."/>
        </authorList>
    </citation>
    <scope>NUCLEOTIDE SEQUENCE [LARGE SCALE GENOMIC DNA]</scope>
    <source>
        <strain>DSM 24528 / JCM 14929 / IAM 14863 / T</strain>
    </source>
</reference>
<dbReference type="EC" id="2.7.7.6" evidence="1"/>
<dbReference type="EMBL" id="AP006840">
    <property type="protein sequence ID" value="BAD42067.1"/>
    <property type="molecule type" value="Genomic_DNA"/>
</dbReference>
<dbReference type="RefSeq" id="WP_011197200.1">
    <property type="nucleotide sequence ID" value="NC_006177.1"/>
</dbReference>
<dbReference type="SMR" id="Q67JT3"/>
<dbReference type="STRING" id="292459.STH3085"/>
<dbReference type="KEGG" id="sth:STH3085"/>
<dbReference type="eggNOG" id="COG0085">
    <property type="taxonomic scope" value="Bacteria"/>
</dbReference>
<dbReference type="HOGENOM" id="CLU_000524_4_1_9"/>
<dbReference type="OrthoDB" id="9803954at2"/>
<dbReference type="Proteomes" id="UP000000417">
    <property type="component" value="Chromosome"/>
</dbReference>
<dbReference type="GO" id="GO:0000428">
    <property type="term" value="C:DNA-directed RNA polymerase complex"/>
    <property type="evidence" value="ECO:0007669"/>
    <property type="project" value="UniProtKB-KW"/>
</dbReference>
<dbReference type="GO" id="GO:0003677">
    <property type="term" value="F:DNA binding"/>
    <property type="evidence" value="ECO:0007669"/>
    <property type="project" value="UniProtKB-UniRule"/>
</dbReference>
<dbReference type="GO" id="GO:0003899">
    <property type="term" value="F:DNA-directed RNA polymerase activity"/>
    <property type="evidence" value="ECO:0007669"/>
    <property type="project" value="UniProtKB-UniRule"/>
</dbReference>
<dbReference type="GO" id="GO:0032549">
    <property type="term" value="F:ribonucleoside binding"/>
    <property type="evidence" value="ECO:0007669"/>
    <property type="project" value="InterPro"/>
</dbReference>
<dbReference type="GO" id="GO:0006351">
    <property type="term" value="P:DNA-templated transcription"/>
    <property type="evidence" value="ECO:0007669"/>
    <property type="project" value="UniProtKB-UniRule"/>
</dbReference>
<dbReference type="CDD" id="cd00653">
    <property type="entry name" value="RNA_pol_B_RPB2"/>
    <property type="match status" value="1"/>
</dbReference>
<dbReference type="FunFam" id="3.90.1800.10:FF:000001">
    <property type="entry name" value="DNA-directed RNA polymerase subunit beta"/>
    <property type="match status" value="1"/>
</dbReference>
<dbReference type="Gene3D" id="2.40.50.100">
    <property type="match status" value="1"/>
</dbReference>
<dbReference type="Gene3D" id="2.40.50.150">
    <property type="match status" value="1"/>
</dbReference>
<dbReference type="Gene3D" id="3.90.1100.10">
    <property type="match status" value="2"/>
</dbReference>
<dbReference type="Gene3D" id="2.30.150.10">
    <property type="entry name" value="DNA-directed RNA polymerase, beta subunit, external 1 domain"/>
    <property type="match status" value="1"/>
</dbReference>
<dbReference type="Gene3D" id="2.40.270.10">
    <property type="entry name" value="DNA-directed RNA polymerase, subunit 2, domain 6"/>
    <property type="match status" value="2"/>
</dbReference>
<dbReference type="Gene3D" id="3.90.1800.10">
    <property type="entry name" value="RNA polymerase alpha subunit dimerisation domain"/>
    <property type="match status" value="1"/>
</dbReference>
<dbReference type="Gene3D" id="3.90.1110.10">
    <property type="entry name" value="RNA polymerase Rpb2, domain 2"/>
    <property type="match status" value="2"/>
</dbReference>
<dbReference type="HAMAP" id="MF_01321">
    <property type="entry name" value="RNApol_bact_RpoB"/>
    <property type="match status" value="1"/>
</dbReference>
<dbReference type="InterPro" id="IPR042107">
    <property type="entry name" value="DNA-dir_RNA_pol_bsu_ext_1_sf"/>
</dbReference>
<dbReference type="InterPro" id="IPR019462">
    <property type="entry name" value="DNA-dir_RNA_pol_bsu_external_1"/>
</dbReference>
<dbReference type="InterPro" id="IPR015712">
    <property type="entry name" value="DNA-dir_RNA_pol_su2"/>
</dbReference>
<dbReference type="InterPro" id="IPR007120">
    <property type="entry name" value="DNA-dir_RNAP_su2_dom"/>
</dbReference>
<dbReference type="InterPro" id="IPR037033">
    <property type="entry name" value="DNA-dir_RNAP_su2_hyb_sf"/>
</dbReference>
<dbReference type="InterPro" id="IPR010243">
    <property type="entry name" value="RNA_pol_bsu_bac"/>
</dbReference>
<dbReference type="InterPro" id="IPR007121">
    <property type="entry name" value="RNA_pol_bsu_CS"/>
</dbReference>
<dbReference type="InterPro" id="IPR007644">
    <property type="entry name" value="RNA_pol_bsu_protrusion"/>
</dbReference>
<dbReference type="InterPro" id="IPR007642">
    <property type="entry name" value="RNA_pol_Rpb2_2"/>
</dbReference>
<dbReference type="InterPro" id="IPR037034">
    <property type="entry name" value="RNA_pol_Rpb2_2_sf"/>
</dbReference>
<dbReference type="InterPro" id="IPR007645">
    <property type="entry name" value="RNA_pol_Rpb2_3"/>
</dbReference>
<dbReference type="InterPro" id="IPR007641">
    <property type="entry name" value="RNA_pol_Rpb2_7"/>
</dbReference>
<dbReference type="InterPro" id="IPR014724">
    <property type="entry name" value="RNA_pol_RPB2_OB-fold"/>
</dbReference>
<dbReference type="NCBIfam" id="NF001616">
    <property type="entry name" value="PRK00405.1"/>
    <property type="match status" value="1"/>
</dbReference>
<dbReference type="NCBIfam" id="TIGR02013">
    <property type="entry name" value="rpoB"/>
    <property type="match status" value="1"/>
</dbReference>
<dbReference type="PANTHER" id="PTHR20856">
    <property type="entry name" value="DNA-DIRECTED RNA POLYMERASE I SUBUNIT 2"/>
    <property type="match status" value="1"/>
</dbReference>
<dbReference type="Pfam" id="PF04563">
    <property type="entry name" value="RNA_pol_Rpb2_1"/>
    <property type="match status" value="1"/>
</dbReference>
<dbReference type="Pfam" id="PF04561">
    <property type="entry name" value="RNA_pol_Rpb2_2"/>
    <property type="match status" value="2"/>
</dbReference>
<dbReference type="Pfam" id="PF04565">
    <property type="entry name" value="RNA_pol_Rpb2_3"/>
    <property type="match status" value="1"/>
</dbReference>
<dbReference type="Pfam" id="PF10385">
    <property type="entry name" value="RNA_pol_Rpb2_45"/>
    <property type="match status" value="1"/>
</dbReference>
<dbReference type="Pfam" id="PF00562">
    <property type="entry name" value="RNA_pol_Rpb2_6"/>
    <property type="match status" value="1"/>
</dbReference>
<dbReference type="Pfam" id="PF04560">
    <property type="entry name" value="RNA_pol_Rpb2_7"/>
    <property type="match status" value="1"/>
</dbReference>
<dbReference type="SUPFAM" id="SSF64484">
    <property type="entry name" value="beta and beta-prime subunits of DNA dependent RNA-polymerase"/>
    <property type="match status" value="1"/>
</dbReference>
<dbReference type="PROSITE" id="PS01166">
    <property type="entry name" value="RNA_POL_BETA"/>
    <property type="match status" value="1"/>
</dbReference>
<sequence>MPKIVQAGRRQRLSFSRIDEVLEMPNLIELQRNSYQWFLREGLQEMFQDISPIQDFTGNLVLEFIDYSLGEPKYSIEECKERDVTYAAPLRVRVRLINKETGEVKEQEVFMGDFPLMTPTGTFIINGAERVIVSQLVRSPGVYFSEQIDPSGKKLFFATMIPNRGAWLEFESDVNDVIYVRVDRTRKLPATVLLRALGFGSDQEILDAVGDSEYIRRTLEKDSTESEEEALIEIYKRLRPGEPPAADNARQLLETLFFEPKRYDLMHVGRYRLNKKLALKRRIVGTSTVDRVVHPETGEVLAEAGVQIDKRLAEKIDEAGVDALTVRLRDGGIVRVVANGRPDIRVKTIVRQDIVAVINYMVSLFKGLGSVDDIDHLGNRRVRSVGELLQNQFRIGLARMERVIKERMTIQDVDIITPQALINIRPVVAAVKEFFGSSQLSQFMDQTNPLAELTNKRRLSALGPGGLSRERAGYEVRDVHTSHYGRMCPIETPEGPNIGLIGALATFARINEYGFIETPYRKVDQESGRVTDEIVYLTADEEDENIIAQANEPLNPDGTFARDRVTCRYRDEILQVPPSQVDYMDVSPKQVVSIATALIPFLENDDASRALMGSNMQRQAVPLLRTEAPYVGTGMEYRSAWDSGVCVIAENDGVVLRATASEVVVQYDDMQVKKYKLTKFTRSNQGTCMNQKPIVRAGDRVRKGDVIADGPSTDQGELALGRNVLVAYMCYEGYNYEDAIIINERLVREDVFTSIHIEEHECEARDTKLGPEEITRDIPNVGEDVLKDLDERGIIRIGAEVRPGDILVGKVTPKGETELTAEERLLRAIFGEKAREVRDTSLRVPHGESGIVVDVKVFTRENGDELSPGVNELVRVYMAQKRKISQGDKMAGRHGNKGVISVIVPEEDMPFMPDGTPIDIILTPLGVPSRMNIGQIMEIHLGWAAKTLGMYVASPVFDGANEQDIREMLLKAHLPPNGKTVLYDGKTGEPFDNEVTVGYKYMLKLHHLVDDKIHARSTGPYSLVTQQPLGGKAQFGGQRFGEMEVWALEAYGAAYTLQELLTVKSDDVVGRVKTYEAIVKGENVPEPGVPESFKVLIKELQSLALDVKVLDESGNEIELRELDDEMDLSDRDLEIPTLGGAELAKPAPDAQAGEESGEAGEESEGEPEEEDVEEIDVPLDPEELEKVAGALKNPVRAGRRGAGGGLADDDQEMDEEDLFDEGDEDLADDVGLYRGRSRRLADDFGDEEEE</sequence>
<organism>
    <name type="scientific">Symbiobacterium thermophilum (strain DSM 24528 / JCM 14929 / IAM 14863 / T)</name>
    <dbReference type="NCBI Taxonomy" id="292459"/>
    <lineage>
        <taxon>Bacteria</taxon>
        <taxon>Bacillati</taxon>
        <taxon>Bacillota</taxon>
        <taxon>Clostridia</taxon>
        <taxon>Eubacteriales</taxon>
        <taxon>Symbiobacteriaceae</taxon>
        <taxon>Symbiobacterium</taxon>
    </lineage>
</organism>
<gene>
    <name evidence="1" type="primary">rpoB</name>
    <name type="ordered locus">STH3085</name>
</gene>
<name>RPOB_SYMTH</name>
<keyword id="KW-0240">DNA-directed RNA polymerase</keyword>
<keyword id="KW-0548">Nucleotidyltransferase</keyword>
<keyword id="KW-1185">Reference proteome</keyword>
<keyword id="KW-0804">Transcription</keyword>
<keyword id="KW-0808">Transferase</keyword>